<sequence length="268" mass="28681">MARFETLFAQLNAKKQGGFVPFVTLCDPDLERSFDIICTLVDNGADALELGFPFSDPLLDGPVIQAANNRALNAGCSTAESFKLLEKVRSKYPEIPIGLLLCANLIYAQTLDGFYRRCAEIGIDAVLVADIPLLAAEPYIQAAKKHGIQPVFICPPNADENTVKGVAEHSEGYTYLVSRAGVTSAENQSHAANLDSLVEQLKAHNAPPILQGFGIAKPQQVKEALNMGVAGAISGSATVKIIEANLDNHEKCLADLAEFVKNMKAATL</sequence>
<keyword id="KW-0028">Amino-acid biosynthesis</keyword>
<keyword id="KW-0057">Aromatic amino acid biosynthesis</keyword>
<keyword id="KW-0456">Lyase</keyword>
<keyword id="KW-0822">Tryptophan biosynthesis</keyword>
<organism>
    <name type="scientific">Mannheimia succiniciproducens (strain KCTC 0769BP / MBEL55E)</name>
    <dbReference type="NCBI Taxonomy" id="221988"/>
    <lineage>
        <taxon>Bacteria</taxon>
        <taxon>Pseudomonadati</taxon>
        <taxon>Pseudomonadota</taxon>
        <taxon>Gammaproteobacteria</taxon>
        <taxon>Pasteurellales</taxon>
        <taxon>Pasteurellaceae</taxon>
        <taxon>Basfia</taxon>
    </lineage>
</organism>
<reference key="1">
    <citation type="journal article" date="2004" name="Nat. Biotechnol.">
        <title>The genome sequence of the capnophilic rumen bacterium Mannheimia succiniciproducens.</title>
        <authorList>
            <person name="Hong S.H."/>
            <person name="Kim J.S."/>
            <person name="Lee S.Y."/>
            <person name="In Y.H."/>
            <person name="Choi S.S."/>
            <person name="Rih J.-K."/>
            <person name="Kim C.H."/>
            <person name="Jeong H."/>
            <person name="Hur C.G."/>
            <person name="Kim J.J."/>
        </authorList>
    </citation>
    <scope>NUCLEOTIDE SEQUENCE [LARGE SCALE GENOMIC DNA]</scope>
    <source>
        <strain>KCTC 0769BP / MBEL55E</strain>
    </source>
</reference>
<comment type="function">
    <text evidence="1">The alpha subunit is responsible for the aldol cleavage of indoleglycerol phosphate to indole and glyceraldehyde 3-phosphate.</text>
</comment>
<comment type="catalytic activity">
    <reaction evidence="1">
        <text>(1S,2R)-1-C-(indol-3-yl)glycerol 3-phosphate + L-serine = D-glyceraldehyde 3-phosphate + L-tryptophan + H2O</text>
        <dbReference type="Rhea" id="RHEA:10532"/>
        <dbReference type="ChEBI" id="CHEBI:15377"/>
        <dbReference type="ChEBI" id="CHEBI:33384"/>
        <dbReference type="ChEBI" id="CHEBI:57912"/>
        <dbReference type="ChEBI" id="CHEBI:58866"/>
        <dbReference type="ChEBI" id="CHEBI:59776"/>
        <dbReference type="EC" id="4.2.1.20"/>
    </reaction>
</comment>
<comment type="pathway">
    <text evidence="1">Amino-acid biosynthesis; L-tryptophan biosynthesis; L-tryptophan from chorismate: step 5/5.</text>
</comment>
<comment type="subunit">
    <text evidence="1">Tetramer of two alpha and two beta chains.</text>
</comment>
<comment type="similarity">
    <text evidence="1">Belongs to the TrpA family.</text>
</comment>
<dbReference type="EC" id="4.2.1.20" evidence="1"/>
<dbReference type="EMBL" id="AE016827">
    <property type="protein sequence ID" value="AAU37761.1"/>
    <property type="molecule type" value="Genomic_DNA"/>
</dbReference>
<dbReference type="RefSeq" id="WP_011200328.1">
    <property type="nucleotide sequence ID" value="NC_006300.1"/>
</dbReference>
<dbReference type="SMR" id="Q65TE9"/>
<dbReference type="STRING" id="221988.MS1154"/>
<dbReference type="KEGG" id="msu:MS1154"/>
<dbReference type="eggNOG" id="COG0159">
    <property type="taxonomic scope" value="Bacteria"/>
</dbReference>
<dbReference type="HOGENOM" id="CLU_016734_0_4_6"/>
<dbReference type="OrthoDB" id="9804578at2"/>
<dbReference type="UniPathway" id="UPA00035">
    <property type="reaction ID" value="UER00044"/>
</dbReference>
<dbReference type="Proteomes" id="UP000000607">
    <property type="component" value="Chromosome"/>
</dbReference>
<dbReference type="GO" id="GO:0005829">
    <property type="term" value="C:cytosol"/>
    <property type="evidence" value="ECO:0007669"/>
    <property type="project" value="TreeGrafter"/>
</dbReference>
<dbReference type="GO" id="GO:0004834">
    <property type="term" value="F:tryptophan synthase activity"/>
    <property type="evidence" value="ECO:0007669"/>
    <property type="project" value="UniProtKB-UniRule"/>
</dbReference>
<dbReference type="CDD" id="cd04724">
    <property type="entry name" value="Tryptophan_synthase_alpha"/>
    <property type="match status" value="1"/>
</dbReference>
<dbReference type="FunFam" id="3.20.20.70:FF:000037">
    <property type="entry name" value="Tryptophan synthase alpha chain"/>
    <property type="match status" value="1"/>
</dbReference>
<dbReference type="Gene3D" id="3.20.20.70">
    <property type="entry name" value="Aldolase class I"/>
    <property type="match status" value="1"/>
</dbReference>
<dbReference type="HAMAP" id="MF_00131">
    <property type="entry name" value="Trp_synth_alpha"/>
    <property type="match status" value="1"/>
</dbReference>
<dbReference type="InterPro" id="IPR013785">
    <property type="entry name" value="Aldolase_TIM"/>
</dbReference>
<dbReference type="InterPro" id="IPR011060">
    <property type="entry name" value="RibuloseP-bd_barrel"/>
</dbReference>
<dbReference type="InterPro" id="IPR018204">
    <property type="entry name" value="Trp_synthase_alpha_AS"/>
</dbReference>
<dbReference type="InterPro" id="IPR002028">
    <property type="entry name" value="Trp_synthase_suA"/>
</dbReference>
<dbReference type="NCBIfam" id="TIGR00262">
    <property type="entry name" value="trpA"/>
    <property type="match status" value="1"/>
</dbReference>
<dbReference type="PANTHER" id="PTHR43406:SF1">
    <property type="entry name" value="TRYPTOPHAN SYNTHASE ALPHA CHAIN, CHLOROPLASTIC"/>
    <property type="match status" value="1"/>
</dbReference>
<dbReference type="PANTHER" id="PTHR43406">
    <property type="entry name" value="TRYPTOPHAN SYNTHASE, ALPHA CHAIN"/>
    <property type="match status" value="1"/>
</dbReference>
<dbReference type="Pfam" id="PF00290">
    <property type="entry name" value="Trp_syntA"/>
    <property type="match status" value="1"/>
</dbReference>
<dbReference type="SUPFAM" id="SSF51366">
    <property type="entry name" value="Ribulose-phoshate binding barrel"/>
    <property type="match status" value="1"/>
</dbReference>
<dbReference type="PROSITE" id="PS00167">
    <property type="entry name" value="TRP_SYNTHASE_ALPHA"/>
    <property type="match status" value="1"/>
</dbReference>
<proteinExistence type="inferred from homology"/>
<gene>
    <name evidence="1" type="primary">trpA</name>
    <name type="ordered locus">MS1154</name>
</gene>
<protein>
    <recommendedName>
        <fullName evidence="1">Tryptophan synthase alpha chain</fullName>
        <ecNumber evidence="1">4.2.1.20</ecNumber>
    </recommendedName>
</protein>
<accession>Q65TE9</accession>
<evidence type="ECO:0000255" key="1">
    <source>
        <dbReference type="HAMAP-Rule" id="MF_00131"/>
    </source>
</evidence>
<feature type="chain" id="PRO_0000098806" description="Tryptophan synthase alpha chain">
    <location>
        <begin position="1"/>
        <end position="268"/>
    </location>
</feature>
<feature type="active site" description="Proton acceptor" evidence="1">
    <location>
        <position position="49"/>
    </location>
</feature>
<feature type="active site" description="Proton acceptor" evidence="1">
    <location>
        <position position="60"/>
    </location>
</feature>
<name>TRPA_MANSM</name>